<gene>
    <name type="primary">MT-CYB</name>
    <name type="synonym">COB</name>
    <name type="synonym">CYTB</name>
    <name type="synonym">MTCYB</name>
</gene>
<name>CYB_MYOBI</name>
<proteinExistence type="inferred from homology"/>
<geneLocation type="mitochondrion"/>
<evidence type="ECO:0000250" key="1"/>
<evidence type="ECO:0000250" key="2">
    <source>
        <dbReference type="UniProtKB" id="P00157"/>
    </source>
</evidence>
<evidence type="ECO:0000255" key="3">
    <source>
        <dbReference type="PROSITE-ProRule" id="PRU00967"/>
    </source>
</evidence>
<evidence type="ECO:0000255" key="4">
    <source>
        <dbReference type="PROSITE-ProRule" id="PRU00968"/>
    </source>
</evidence>
<accession>Q6U1P6</accession>
<organism>
    <name type="scientific">Myotragus balearicus</name>
    <name type="common">Balearic islands cave goat</name>
    <dbReference type="NCBI Taxonomy" id="201717"/>
    <lineage>
        <taxon>Eukaryota</taxon>
        <taxon>Metazoa</taxon>
        <taxon>Chordata</taxon>
        <taxon>Craniata</taxon>
        <taxon>Vertebrata</taxon>
        <taxon>Euteleostomi</taxon>
        <taxon>Mammalia</taxon>
        <taxon>Eutheria</taxon>
        <taxon>Laurasiatheria</taxon>
        <taxon>Artiodactyla</taxon>
        <taxon>Ruminantia</taxon>
        <taxon>Pecora</taxon>
        <taxon>Bovidae</taxon>
        <taxon>Caprinae</taxon>
        <taxon>Myotragus</taxon>
    </lineage>
</organism>
<comment type="function">
    <text evidence="2">Component of the ubiquinol-cytochrome c reductase complex (complex III or cytochrome b-c1 complex) that is part of the mitochondrial respiratory chain. The b-c1 complex mediates electron transfer from ubiquinol to cytochrome c. Contributes to the generation of a proton gradient across the mitochondrial membrane that is then used for ATP synthesis.</text>
</comment>
<comment type="cofactor">
    <cofactor evidence="2">
        <name>heme b</name>
        <dbReference type="ChEBI" id="CHEBI:60344"/>
    </cofactor>
    <text evidence="2">Binds 2 heme b groups non-covalently.</text>
</comment>
<comment type="subunit">
    <text evidence="2">The cytochrome bc1 complex contains 11 subunits: 3 respiratory subunits (MT-CYB, CYC1 and UQCRFS1), 2 core proteins (UQCRC1 and UQCRC2) and 6 low-molecular weight proteins (UQCRH/QCR6, UQCRB/QCR7, UQCRQ/QCR8, UQCR10/QCR9, UQCR11/QCR10 and a cleavage product of UQCRFS1). This cytochrome bc1 complex then forms a dimer.</text>
</comment>
<comment type="subcellular location">
    <subcellularLocation>
        <location evidence="2">Mitochondrion inner membrane</location>
        <topology evidence="2">Multi-pass membrane protein</topology>
    </subcellularLocation>
</comment>
<comment type="miscellaneous">
    <text evidence="1">Heme 1 (or BL or b562) is low-potential and absorbs at about 562 nm, and heme 2 (or BH or b566) is high-potential and absorbs at about 566 nm.</text>
</comment>
<comment type="similarity">
    <text evidence="3 4">Belongs to the cytochrome b family.</text>
</comment>
<comment type="caution">
    <text evidence="2">The full-length protein contains only eight transmembrane helices, not nine as predicted by bioinformatics tools.</text>
</comment>
<keyword id="KW-0249">Electron transport</keyword>
<keyword id="KW-0952">Extinct organism protein</keyword>
<keyword id="KW-0349">Heme</keyword>
<keyword id="KW-0408">Iron</keyword>
<keyword id="KW-0472">Membrane</keyword>
<keyword id="KW-0479">Metal-binding</keyword>
<keyword id="KW-0496">Mitochondrion</keyword>
<keyword id="KW-0999">Mitochondrion inner membrane</keyword>
<keyword id="KW-0679">Respiratory chain</keyword>
<keyword id="KW-0812">Transmembrane</keyword>
<keyword id="KW-1133">Transmembrane helix</keyword>
<keyword id="KW-0813">Transport</keyword>
<keyword id="KW-0830">Ubiquinone</keyword>
<sequence>MTNFRKTNPLMKIVNNAFIDLPAPSNISSWWNFGSLLGVCLILQILTGLFLAMHYTSDTTTACSSVAHICRDVNYGWIIRYMHANGASMFFVCLFMHVGRGLYYGSYTFLETWNIGMILLFTTMATAFMGYVLPWGQMSFWGATVITNLLSAIPYIGTNLVEWIWGGFSVDKATLTRFFAFHFILPFIITALAMVHLLFLHETGSNNPSGIPSDADKIPFHPYYTIKDILGMMLLILILMLLVLFTPDLLGDPDNYTPANPLNTPPHIKPEWYFLFAYAILRSIPKKLGGVLALVLSILILVLMPLLHKSKQWSMMFQPISQCLVWILVADLLTLTWIGGQPVEHPYIIIGQLASIMYFLIILVMMPVASTIENNLLKW</sequence>
<protein>
    <recommendedName>
        <fullName>Cytochrome b</fullName>
    </recommendedName>
    <alternativeName>
        <fullName>Complex III subunit 3</fullName>
    </alternativeName>
    <alternativeName>
        <fullName>Complex III subunit III</fullName>
    </alternativeName>
    <alternativeName>
        <fullName>Cytochrome b-c1 complex subunit 3</fullName>
    </alternativeName>
    <alternativeName>
        <fullName>Ubiquinol-cytochrome-c reductase complex cytochrome b subunit</fullName>
    </alternativeName>
</protein>
<reference key="1">
    <citation type="journal article" date="2005" name="BMC Evol. Biol.">
        <title>Molecular dating of caprines using ancient DNA sequences of Myotragus balearicus, an extinct endemic Balearic mammal.</title>
        <authorList>
            <person name="Lalueza-Fox C."/>
            <person name="Castresana J."/>
            <person name="Sampietro L."/>
            <person name="Marques-Bonet T."/>
            <person name="Alcover J.A."/>
            <person name="Bertranpetit J."/>
        </authorList>
    </citation>
    <scope>NUCLEOTIDE SEQUENCE [GENOMIC DNA]</scope>
</reference>
<dbReference type="EMBL" id="AY380560">
    <property type="protein sequence ID" value="AAQ88170.1"/>
    <property type="molecule type" value="Genomic_DNA"/>
</dbReference>
<dbReference type="SMR" id="Q6U1P6"/>
<dbReference type="GO" id="GO:0005743">
    <property type="term" value="C:mitochondrial inner membrane"/>
    <property type="evidence" value="ECO:0007669"/>
    <property type="project" value="UniProtKB-SubCell"/>
</dbReference>
<dbReference type="GO" id="GO:0045275">
    <property type="term" value="C:respiratory chain complex III"/>
    <property type="evidence" value="ECO:0007669"/>
    <property type="project" value="InterPro"/>
</dbReference>
<dbReference type="GO" id="GO:0046872">
    <property type="term" value="F:metal ion binding"/>
    <property type="evidence" value="ECO:0007669"/>
    <property type="project" value="UniProtKB-KW"/>
</dbReference>
<dbReference type="GO" id="GO:0008121">
    <property type="term" value="F:ubiquinol-cytochrome-c reductase activity"/>
    <property type="evidence" value="ECO:0007669"/>
    <property type="project" value="InterPro"/>
</dbReference>
<dbReference type="GO" id="GO:0006122">
    <property type="term" value="P:mitochondrial electron transport, ubiquinol to cytochrome c"/>
    <property type="evidence" value="ECO:0007669"/>
    <property type="project" value="TreeGrafter"/>
</dbReference>
<dbReference type="CDD" id="cd00290">
    <property type="entry name" value="cytochrome_b_C"/>
    <property type="match status" value="1"/>
</dbReference>
<dbReference type="CDD" id="cd00284">
    <property type="entry name" value="Cytochrome_b_N"/>
    <property type="match status" value="1"/>
</dbReference>
<dbReference type="FunFam" id="1.20.810.10:FF:000002">
    <property type="entry name" value="Cytochrome b"/>
    <property type="match status" value="1"/>
</dbReference>
<dbReference type="Gene3D" id="1.20.810.10">
    <property type="entry name" value="Cytochrome Bc1 Complex, Chain C"/>
    <property type="match status" value="1"/>
</dbReference>
<dbReference type="InterPro" id="IPR005798">
    <property type="entry name" value="Cyt_b/b6_C"/>
</dbReference>
<dbReference type="InterPro" id="IPR036150">
    <property type="entry name" value="Cyt_b/b6_C_sf"/>
</dbReference>
<dbReference type="InterPro" id="IPR005797">
    <property type="entry name" value="Cyt_b/b6_N"/>
</dbReference>
<dbReference type="InterPro" id="IPR027387">
    <property type="entry name" value="Cytb/b6-like_sf"/>
</dbReference>
<dbReference type="InterPro" id="IPR030689">
    <property type="entry name" value="Cytochrome_b"/>
</dbReference>
<dbReference type="InterPro" id="IPR048260">
    <property type="entry name" value="Cytochrome_b_C_euk/bac"/>
</dbReference>
<dbReference type="InterPro" id="IPR048259">
    <property type="entry name" value="Cytochrome_b_N_euk/bac"/>
</dbReference>
<dbReference type="InterPro" id="IPR016174">
    <property type="entry name" value="Di-haem_cyt_TM"/>
</dbReference>
<dbReference type="PANTHER" id="PTHR19271">
    <property type="entry name" value="CYTOCHROME B"/>
    <property type="match status" value="1"/>
</dbReference>
<dbReference type="PANTHER" id="PTHR19271:SF16">
    <property type="entry name" value="CYTOCHROME B"/>
    <property type="match status" value="1"/>
</dbReference>
<dbReference type="Pfam" id="PF00032">
    <property type="entry name" value="Cytochrom_B_C"/>
    <property type="match status" value="1"/>
</dbReference>
<dbReference type="Pfam" id="PF00033">
    <property type="entry name" value="Cytochrome_B"/>
    <property type="match status" value="1"/>
</dbReference>
<dbReference type="PIRSF" id="PIRSF038885">
    <property type="entry name" value="COB"/>
    <property type="match status" value="1"/>
</dbReference>
<dbReference type="SUPFAM" id="SSF81648">
    <property type="entry name" value="a domain/subunit of cytochrome bc1 complex (Ubiquinol-cytochrome c reductase)"/>
    <property type="match status" value="1"/>
</dbReference>
<dbReference type="SUPFAM" id="SSF81342">
    <property type="entry name" value="Transmembrane di-heme cytochromes"/>
    <property type="match status" value="1"/>
</dbReference>
<dbReference type="PROSITE" id="PS51003">
    <property type="entry name" value="CYTB_CTER"/>
    <property type="match status" value="1"/>
</dbReference>
<dbReference type="PROSITE" id="PS51002">
    <property type="entry name" value="CYTB_NTER"/>
    <property type="match status" value="1"/>
</dbReference>
<feature type="chain" id="PRO_0000254736" description="Cytochrome b">
    <location>
        <begin position="1"/>
        <end position="379"/>
    </location>
</feature>
<feature type="transmembrane region" description="Helical" evidence="2">
    <location>
        <begin position="33"/>
        <end position="53"/>
    </location>
</feature>
<feature type="transmembrane region" description="Helical" evidence="2">
    <location>
        <begin position="77"/>
        <end position="98"/>
    </location>
</feature>
<feature type="transmembrane region" description="Helical" evidence="2">
    <location>
        <begin position="113"/>
        <end position="133"/>
    </location>
</feature>
<feature type="transmembrane region" description="Helical" evidence="2">
    <location>
        <begin position="178"/>
        <end position="198"/>
    </location>
</feature>
<feature type="transmembrane region" description="Helical" evidence="2">
    <location>
        <begin position="226"/>
        <end position="246"/>
    </location>
</feature>
<feature type="transmembrane region" description="Helical" evidence="2">
    <location>
        <begin position="288"/>
        <end position="308"/>
    </location>
</feature>
<feature type="transmembrane region" description="Helical" evidence="2">
    <location>
        <begin position="320"/>
        <end position="340"/>
    </location>
</feature>
<feature type="transmembrane region" description="Helical" evidence="2">
    <location>
        <begin position="347"/>
        <end position="367"/>
    </location>
</feature>
<feature type="binding site" description="axial binding residue" evidence="2">
    <location>
        <position position="83"/>
    </location>
    <ligand>
        <name>heme b</name>
        <dbReference type="ChEBI" id="CHEBI:60344"/>
        <label>b562</label>
    </ligand>
    <ligandPart>
        <name>Fe</name>
        <dbReference type="ChEBI" id="CHEBI:18248"/>
    </ligandPart>
</feature>
<feature type="binding site" description="axial binding residue" evidence="2">
    <location>
        <position position="97"/>
    </location>
    <ligand>
        <name>heme b</name>
        <dbReference type="ChEBI" id="CHEBI:60344"/>
        <label>b566</label>
    </ligand>
    <ligandPart>
        <name>Fe</name>
        <dbReference type="ChEBI" id="CHEBI:18248"/>
    </ligandPart>
</feature>
<feature type="binding site" description="axial binding residue" evidence="2">
    <location>
        <position position="182"/>
    </location>
    <ligand>
        <name>heme b</name>
        <dbReference type="ChEBI" id="CHEBI:60344"/>
        <label>b562</label>
    </ligand>
    <ligandPart>
        <name>Fe</name>
        <dbReference type="ChEBI" id="CHEBI:18248"/>
    </ligandPart>
</feature>
<feature type="binding site" description="axial binding residue" evidence="2">
    <location>
        <position position="196"/>
    </location>
    <ligand>
        <name>heme b</name>
        <dbReference type="ChEBI" id="CHEBI:60344"/>
        <label>b566</label>
    </ligand>
    <ligandPart>
        <name>Fe</name>
        <dbReference type="ChEBI" id="CHEBI:18248"/>
    </ligandPart>
</feature>
<feature type="binding site" evidence="2">
    <location>
        <position position="201"/>
    </location>
    <ligand>
        <name>a ubiquinone</name>
        <dbReference type="ChEBI" id="CHEBI:16389"/>
    </ligand>
</feature>